<protein>
    <recommendedName>
        <fullName evidence="1">Protein-L-isoaspartate O-methyltransferase</fullName>
        <ecNumber evidence="1">2.1.1.77</ecNumber>
    </recommendedName>
    <alternativeName>
        <fullName evidence="1">L-isoaspartyl protein carboxyl methyltransferase</fullName>
    </alternativeName>
    <alternativeName>
        <fullName evidence="1">Protein L-isoaspartyl methyltransferase</fullName>
    </alternativeName>
    <alternativeName>
        <fullName evidence="1">Protein-beta-aspartate methyltransferase</fullName>
        <shortName evidence="1">PIMT</shortName>
    </alternativeName>
</protein>
<name>PIMT_MARSD</name>
<evidence type="ECO:0000255" key="1">
    <source>
        <dbReference type="HAMAP-Rule" id="MF_00090"/>
    </source>
</evidence>
<keyword id="KW-0963">Cytoplasm</keyword>
<keyword id="KW-0489">Methyltransferase</keyword>
<keyword id="KW-1185">Reference proteome</keyword>
<keyword id="KW-0949">S-adenosyl-L-methionine</keyword>
<keyword id="KW-0808">Transferase</keyword>
<reference key="1">
    <citation type="submission" date="2009-06" db="EMBL/GenBank/DDBJ databases">
        <title>Complete sequence of Desulfovibrio salexigens DSM 2638.</title>
        <authorList>
            <consortium name="US DOE Joint Genome Institute"/>
            <person name="Lucas S."/>
            <person name="Copeland A."/>
            <person name="Lapidus A."/>
            <person name="Glavina del Rio T."/>
            <person name="Tice H."/>
            <person name="Bruce D."/>
            <person name="Goodwin L."/>
            <person name="Pitluck S."/>
            <person name="Munk A.C."/>
            <person name="Brettin T."/>
            <person name="Detter J.C."/>
            <person name="Han C."/>
            <person name="Tapia R."/>
            <person name="Larimer F."/>
            <person name="Land M."/>
            <person name="Hauser L."/>
            <person name="Kyrpides N."/>
            <person name="Anderson I."/>
            <person name="Wall J.D."/>
            <person name="Arkin A.P."/>
            <person name="Dehal P."/>
            <person name="Chivian D."/>
            <person name="Giles B."/>
            <person name="Hazen T.C."/>
        </authorList>
    </citation>
    <scope>NUCLEOTIDE SEQUENCE [LARGE SCALE GENOMIC DNA]</scope>
    <source>
        <strain>ATCC 14822 / DSM 2638 / NCIMB 8403 / VKM B-1763</strain>
    </source>
</reference>
<organism>
    <name type="scientific">Maridesulfovibrio salexigens (strain ATCC 14822 / DSM 2638 / NCIMB 8403 / VKM B-1763)</name>
    <name type="common">Desulfovibrio salexigens</name>
    <dbReference type="NCBI Taxonomy" id="526222"/>
    <lineage>
        <taxon>Bacteria</taxon>
        <taxon>Pseudomonadati</taxon>
        <taxon>Thermodesulfobacteriota</taxon>
        <taxon>Desulfovibrionia</taxon>
        <taxon>Desulfovibrionales</taxon>
        <taxon>Desulfovibrionaceae</taxon>
        <taxon>Maridesulfovibrio</taxon>
    </lineage>
</organism>
<accession>C6BTT9</accession>
<gene>
    <name evidence="1" type="primary">pcm</name>
    <name type="ordered locus">Desal_1807</name>
</gene>
<sequence length="214" mass="23678">MRIDPKRSRLKMVEEQIAARGVADKNVLDAMRRVPRHMFVQDALASRAYSDSALPIGEGQTISQPYIVAVMSELLQIESGHKVLEIGTGSGYQAAVLAEMGADVFSVERIRKLFISARKLLFDMRYFNIQLKLDDGTMGWPENAPYDRIIVTAGGPEIPQYLIDQLADPGILVIPVGGQRRVQRLMLVTKTDGKIETTDMGGCAFVDLVGKQGW</sequence>
<dbReference type="EC" id="2.1.1.77" evidence="1"/>
<dbReference type="EMBL" id="CP001649">
    <property type="protein sequence ID" value="ACS79869.1"/>
    <property type="molecule type" value="Genomic_DNA"/>
</dbReference>
<dbReference type="RefSeq" id="WP_015851685.1">
    <property type="nucleotide sequence ID" value="NC_012881.1"/>
</dbReference>
<dbReference type="SMR" id="C6BTT9"/>
<dbReference type="STRING" id="526222.Desal_1807"/>
<dbReference type="KEGG" id="dsa:Desal_1807"/>
<dbReference type="eggNOG" id="COG2518">
    <property type="taxonomic scope" value="Bacteria"/>
</dbReference>
<dbReference type="HOGENOM" id="CLU_055432_2_0_7"/>
<dbReference type="OrthoDB" id="9810066at2"/>
<dbReference type="Proteomes" id="UP000002601">
    <property type="component" value="Chromosome"/>
</dbReference>
<dbReference type="GO" id="GO:0005737">
    <property type="term" value="C:cytoplasm"/>
    <property type="evidence" value="ECO:0007669"/>
    <property type="project" value="UniProtKB-SubCell"/>
</dbReference>
<dbReference type="GO" id="GO:0004719">
    <property type="term" value="F:protein-L-isoaspartate (D-aspartate) O-methyltransferase activity"/>
    <property type="evidence" value="ECO:0007669"/>
    <property type="project" value="UniProtKB-UniRule"/>
</dbReference>
<dbReference type="GO" id="GO:0032259">
    <property type="term" value="P:methylation"/>
    <property type="evidence" value="ECO:0007669"/>
    <property type="project" value="UniProtKB-KW"/>
</dbReference>
<dbReference type="GO" id="GO:0036211">
    <property type="term" value="P:protein modification process"/>
    <property type="evidence" value="ECO:0007669"/>
    <property type="project" value="UniProtKB-UniRule"/>
</dbReference>
<dbReference type="GO" id="GO:0030091">
    <property type="term" value="P:protein repair"/>
    <property type="evidence" value="ECO:0007669"/>
    <property type="project" value="UniProtKB-UniRule"/>
</dbReference>
<dbReference type="CDD" id="cd02440">
    <property type="entry name" value="AdoMet_MTases"/>
    <property type="match status" value="1"/>
</dbReference>
<dbReference type="FunFam" id="3.40.50.150:FF:000010">
    <property type="entry name" value="Protein-L-isoaspartate O-methyltransferase"/>
    <property type="match status" value="1"/>
</dbReference>
<dbReference type="Gene3D" id="3.40.50.150">
    <property type="entry name" value="Vaccinia Virus protein VP39"/>
    <property type="match status" value="1"/>
</dbReference>
<dbReference type="HAMAP" id="MF_00090">
    <property type="entry name" value="PIMT"/>
    <property type="match status" value="1"/>
</dbReference>
<dbReference type="InterPro" id="IPR000682">
    <property type="entry name" value="PCMT"/>
</dbReference>
<dbReference type="InterPro" id="IPR029063">
    <property type="entry name" value="SAM-dependent_MTases_sf"/>
</dbReference>
<dbReference type="NCBIfam" id="TIGR00080">
    <property type="entry name" value="pimt"/>
    <property type="match status" value="1"/>
</dbReference>
<dbReference type="NCBIfam" id="NF001453">
    <property type="entry name" value="PRK00312.1"/>
    <property type="match status" value="1"/>
</dbReference>
<dbReference type="PANTHER" id="PTHR11579">
    <property type="entry name" value="PROTEIN-L-ISOASPARTATE O-METHYLTRANSFERASE"/>
    <property type="match status" value="1"/>
</dbReference>
<dbReference type="PANTHER" id="PTHR11579:SF0">
    <property type="entry name" value="PROTEIN-L-ISOASPARTATE(D-ASPARTATE) O-METHYLTRANSFERASE"/>
    <property type="match status" value="1"/>
</dbReference>
<dbReference type="Pfam" id="PF01135">
    <property type="entry name" value="PCMT"/>
    <property type="match status" value="1"/>
</dbReference>
<dbReference type="SUPFAM" id="SSF53335">
    <property type="entry name" value="S-adenosyl-L-methionine-dependent methyltransferases"/>
    <property type="match status" value="1"/>
</dbReference>
<dbReference type="PROSITE" id="PS01279">
    <property type="entry name" value="PCMT"/>
    <property type="match status" value="1"/>
</dbReference>
<feature type="chain" id="PRO_1000202661" description="Protein-L-isoaspartate O-methyltransferase">
    <location>
        <begin position="1"/>
        <end position="214"/>
    </location>
</feature>
<feature type="active site" evidence="1">
    <location>
        <position position="63"/>
    </location>
</feature>
<proteinExistence type="inferred from homology"/>
<comment type="function">
    <text evidence="1">Catalyzes the methyl esterification of L-isoaspartyl residues in peptides and proteins that result from spontaneous decomposition of normal L-aspartyl and L-asparaginyl residues. It plays a role in the repair and/or degradation of damaged proteins.</text>
</comment>
<comment type="catalytic activity">
    <reaction evidence="1">
        <text>[protein]-L-isoaspartate + S-adenosyl-L-methionine = [protein]-L-isoaspartate alpha-methyl ester + S-adenosyl-L-homocysteine</text>
        <dbReference type="Rhea" id="RHEA:12705"/>
        <dbReference type="Rhea" id="RHEA-COMP:12143"/>
        <dbReference type="Rhea" id="RHEA-COMP:12144"/>
        <dbReference type="ChEBI" id="CHEBI:57856"/>
        <dbReference type="ChEBI" id="CHEBI:59789"/>
        <dbReference type="ChEBI" id="CHEBI:90596"/>
        <dbReference type="ChEBI" id="CHEBI:90598"/>
        <dbReference type="EC" id="2.1.1.77"/>
    </reaction>
</comment>
<comment type="subcellular location">
    <subcellularLocation>
        <location evidence="1">Cytoplasm</location>
    </subcellularLocation>
</comment>
<comment type="similarity">
    <text evidence="1">Belongs to the methyltransferase superfamily. L-isoaspartyl/D-aspartyl protein methyltransferase family.</text>
</comment>